<accession>Q2J4S0</accession>
<dbReference type="EC" id="4.1.1.11" evidence="1"/>
<dbReference type="EMBL" id="CP000249">
    <property type="protein sequence ID" value="ABD13722.1"/>
    <property type="molecule type" value="Genomic_DNA"/>
</dbReference>
<dbReference type="SMR" id="Q2J4S0"/>
<dbReference type="STRING" id="106370.Francci3_4376"/>
<dbReference type="KEGG" id="fra:Francci3_4376"/>
<dbReference type="eggNOG" id="COG0853">
    <property type="taxonomic scope" value="Bacteria"/>
</dbReference>
<dbReference type="HOGENOM" id="CLU_115305_0_0_11"/>
<dbReference type="OrthoDB" id="9803983at2"/>
<dbReference type="PhylomeDB" id="Q2J4S0"/>
<dbReference type="UniPathway" id="UPA00028">
    <property type="reaction ID" value="UER00002"/>
</dbReference>
<dbReference type="Proteomes" id="UP000001937">
    <property type="component" value="Chromosome"/>
</dbReference>
<dbReference type="GO" id="GO:0005829">
    <property type="term" value="C:cytosol"/>
    <property type="evidence" value="ECO:0007669"/>
    <property type="project" value="TreeGrafter"/>
</dbReference>
<dbReference type="GO" id="GO:0004068">
    <property type="term" value="F:aspartate 1-decarboxylase activity"/>
    <property type="evidence" value="ECO:0007669"/>
    <property type="project" value="UniProtKB-UniRule"/>
</dbReference>
<dbReference type="GO" id="GO:0006523">
    <property type="term" value="P:alanine biosynthetic process"/>
    <property type="evidence" value="ECO:0007669"/>
    <property type="project" value="InterPro"/>
</dbReference>
<dbReference type="GO" id="GO:0015940">
    <property type="term" value="P:pantothenate biosynthetic process"/>
    <property type="evidence" value="ECO:0007669"/>
    <property type="project" value="UniProtKB-UniRule"/>
</dbReference>
<dbReference type="CDD" id="cd06919">
    <property type="entry name" value="Asp_decarbox"/>
    <property type="match status" value="1"/>
</dbReference>
<dbReference type="Gene3D" id="2.40.40.20">
    <property type="match status" value="1"/>
</dbReference>
<dbReference type="HAMAP" id="MF_00446">
    <property type="entry name" value="PanD"/>
    <property type="match status" value="1"/>
</dbReference>
<dbReference type="InterPro" id="IPR009010">
    <property type="entry name" value="Asp_de-COase-like_dom_sf"/>
</dbReference>
<dbReference type="InterPro" id="IPR003190">
    <property type="entry name" value="Asp_decarbox"/>
</dbReference>
<dbReference type="NCBIfam" id="TIGR00223">
    <property type="entry name" value="panD"/>
    <property type="match status" value="1"/>
</dbReference>
<dbReference type="PANTHER" id="PTHR21012">
    <property type="entry name" value="ASPARTATE 1-DECARBOXYLASE"/>
    <property type="match status" value="1"/>
</dbReference>
<dbReference type="PANTHER" id="PTHR21012:SF0">
    <property type="entry name" value="ASPARTATE 1-DECARBOXYLASE"/>
    <property type="match status" value="1"/>
</dbReference>
<dbReference type="Pfam" id="PF02261">
    <property type="entry name" value="Asp_decarbox"/>
    <property type="match status" value="1"/>
</dbReference>
<dbReference type="SUPFAM" id="SSF50692">
    <property type="entry name" value="ADC-like"/>
    <property type="match status" value="1"/>
</dbReference>
<name>PAND2_FRACC</name>
<evidence type="ECO:0000255" key="1">
    <source>
        <dbReference type="HAMAP-Rule" id="MF_00446"/>
    </source>
</evidence>
<proteinExistence type="inferred from homology"/>
<sequence>MLRTMLTAKIHRATVTQADLHYVGSVTIDADLLAAADLLPGEQVTIVDINNGARLETYAIAGPAGSGIIGINGAAARLVQPGDLVIIIAYGLMDDAEARRHVPKVLFVDAANRIIGHGDDPAEPLPGDPSSLRGDIPVDIPVDIPVPTAAAAVRSAMATQ</sequence>
<keyword id="KW-0068">Autocatalytic cleavage</keyword>
<keyword id="KW-0963">Cytoplasm</keyword>
<keyword id="KW-0210">Decarboxylase</keyword>
<keyword id="KW-0456">Lyase</keyword>
<keyword id="KW-0566">Pantothenate biosynthesis</keyword>
<keyword id="KW-0670">Pyruvate</keyword>
<keyword id="KW-1185">Reference proteome</keyword>
<keyword id="KW-0704">Schiff base</keyword>
<keyword id="KW-0865">Zymogen</keyword>
<gene>
    <name evidence="1" type="primary">panD2</name>
    <name type="ordered locus">Francci3_4376</name>
</gene>
<reference key="1">
    <citation type="journal article" date="2007" name="Genome Res.">
        <title>Genome characteristics of facultatively symbiotic Frankia sp. strains reflect host range and host plant biogeography.</title>
        <authorList>
            <person name="Normand P."/>
            <person name="Lapierre P."/>
            <person name="Tisa L.S."/>
            <person name="Gogarten J.P."/>
            <person name="Alloisio N."/>
            <person name="Bagnarol E."/>
            <person name="Bassi C.A."/>
            <person name="Berry A.M."/>
            <person name="Bickhart D.M."/>
            <person name="Choisne N."/>
            <person name="Couloux A."/>
            <person name="Cournoyer B."/>
            <person name="Cruveiller S."/>
            <person name="Daubin V."/>
            <person name="Demange N."/>
            <person name="Francino M.P."/>
            <person name="Goltsman E."/>
            <person name="Huang Y."/>
            <person name="Kopp O.R."/>
            <person name="Labarre L."/>
            <person name="Lapidus A."/>
            <person name="Lavire C."/>
            <person name="Marechal J."/>
            <person name="Martinez M."/>
            <person name="Mastronunzio J.E."/>
            <person name="Mullin B.C."/>
            <person name="Niemann J."/>
            <person name="Pujic P."/>
            <person name="Rawnsley T."/>
            <person name="Rouy Z."/>
            <person name="Schenowitz C."/>
            <person name="Sellstedt A."/>
            <person name="Tavares F."/>
            <person name="Tomkins J.P."/>
            <person name="Vallenet D."/>
            <person name="Valverde C."/>
            <person name="Wall L.G."/>
            <person name="Wang Y."/>
            <person name="Medigue C."/>
            <person name="Benson D.R."/>
        </authorList>
    </citation>
    <scope>NUCLEOTIDE SEQUENCE [LARGE SCALE GENOMIC DNA]</scope>
    <source>
        <strain>DSM 45818 / CECT 9043 / HFP020203 / CcI3</strain>
    </source>
</reference>
<feature type="chain" id="PRO_0000236873" description="Aspartate 1-decarboxylase beta chain" evidence="1">
    <location>
        <begin position="1"/>
        <end position="24"/>
    </location>
</feature>
<feature type="chain" id="PRO_0000236874" description="Aspartate 1-decarboxylase alpha chain" evidence="1">
    <location>
        <begin position="25"/>
        <end position="160"/>
    </location>
</feature>
<feature type="active site" description="Schiff-base intermediate with substrate; via pyruvic acid" evidence="1">
    <location>
        <position position="25"/>
    </location>
</feature>
<feature type="active site" description="Proton donor" evidence="1">
    <location>
        <position position="58"/>
    </location>
</feature>
<feature type="binding site" evidence="1">
    <location>
        <position position="57"/>
    </location>
    <ligand>
        <name>substrate</name>
    </ligand>
</feature>
<feature type="binding site" evidence="1">
    <location>
        <begin position="73"/>
        <end position="75"/>
    </location>
    <ligand>
        <name>substrate</name>
    </ligand>
</feature>
<feature type="modified residue" description="Pyruvic acid (Ser)" evidence="1">
    <location>
        <position position="25"/>
    </location>
</feature>
<protein>
    <recommendedName>
        <fullName evidence="1">Aspartate 1-decarboxylase 2</fullName>
        <ecNumber evidence="1">4.1.1.11</ecNumber>
    </recommendedName>
    <alternativeName>
        <fullName evidence="1">Aspartate alpha-decarboxylase 2</fullName>
    </alternativeName>
    <component>
        <recommendedName>
            <fullName evidence="1">Aspartate 1-decarboxylase beta chain</fullName>
        </recommendedName>
    </component>
    <component>
        <recommendedName>
            <fullName evidence="1">Aspartate 1-decarboxylase alpha chain</fullName>
        </recommendedName>
    </component>
</protein>
<organism>
    <name type="scientific">Frankia casuarinae (strain DSM 45818 / CECT 9043 / HFP020203 / CcI3)</name>
    <dbReference type="NCBI Taxonomy" id="106370"/>
    <lineage>
        <taxon>Bacteria</taxon>
        <taxon>Bacillati</taxon>
        <taxon>Actinomycetota</taxon>
        <taxon>Actinomycetes</taxon>
        <taxon>Frankiales</taxon>
        <taxon>Frankiaceae</taxon>
        <taxon>Frankia</taxon>
    </lineage>
</organism>
<comment type="function">
    <text evidence="1">Catalyzes the pyruvoyl-dependent decarboxylation of aspartate to produce beta-alanine.</text>
</comment>
<comment type="catalytic activity">
    <reaction evidence="1">
        <text>L-aspartate + H(+) = beta-alanine + CO2</text>
        <dbReference type="Rhea" id="RHEA:19497"/>
        <dbReference type="ChEBI" id="CHEBI:15378"/>
        <dbReference type="ChEBI" id="CHEBI:16526"/>
        <dbReference type="ChEBI" id="CHEBI:29991"/>
        <dbReference type="ChEBI" id="CHEBI:57966"/>
        <dbReference type="EC" id="4.1.1.11"/>
    </reaction>
</comment>
<comment type="cofactor">
    <cofactor evidence="1">
        <name>pyruvate</name>
        <dbReference type="ChEBI" id="CHEBI:15361"/>
    </cofactor>
    <text evidence="1">Binds 1 pyruvoyl group covalently per subunit.</text>
</comment>
<comment type="pathway">
    <text evidence="1">Cofactor biosynthesis; (R)-pantothenate biosynthesis; beta-alanine from L-aspartate: step 1/1.</text>
</comment>
<comment type="subunit">
    <text evidence="1">Heterooctamer of four alpha and four beta subunits.</text>
</comment>
<comment type="subcellular location">
    <subcellularLocation>
        <location evidence="1">Cytoplasm</location>
    </subcellularLocation>
</comment>
<comment type="PTM">
    <text evidence="1">Is synthesized initially as an inactive proenzyme, which is activated by self-cleavage at a specific serine bond to produce a beta-subunit with a hydroxyl group at its C-terminus and an alpha-subunit with a pyruvoyl group at its N-terminus.</text>
</comment>
<comment type="similarity">
    <text evidence="1">Belongs to the PanD family.</text>
</comment>